<name>ATG5_EREGS</name>
<organism>
    <name type="scientific">Eremothecium gossypii (strain ATCC 10895 / CBS 109.51 / FGSC 9923 / NRRL Y-1056)</name>
    <name type="common">Yeast</name>
    <name type="synonym">Ashbya gossypii</name>
    <dbReference type="NCBI Taxonomy" id="284811"/>
    <lineage>
        <taxon>Eukaryota</taxon>
        <taxon>Fungi</taxon>
        <taxon>Dikarya</taxon>
        <taxon>Ascomycota</taxon>
        <taxon>Saccharomycotina</taxon>
        <taxon>Saccharomycetes</taxon>
        <taxon>Saccharomycetales</taxon>
        <taxon>Saccharomycetaceae</taxon>
        <taxon>Eremothecium</taxon>
    </lineage>
</organism>
<dbReference type="EMBL" id="AE016816">
    <property type="protein sequence ID" value="AAS51357.2"/>
    <property type="molecule type" value="Genomic_DNA"/>
</dbReference>
<dbReference type="RefSeq" id="NP_983533.2">
    <property type="nucleotide sequence ID" value="NM_208886.2"/>
</dbReference>
<dbReference type="SMR" id="Q75BY9"/>
<dbReference type="FunCoup" id="Q75BY9">
    <property type="interactions" value="356"/>
</dbReference>
<dbReference type="STRING" id="284811.Q75BY9"/>
<dbReference type="EnsemblFungi" id="AAS51357">
    <property type="protein sequence ID" value="AAS51357"/>
    <property type="gene ID" value="AGOS_ACR131C"/>
</dbReference>
<dbReference type="GeneID" id="4619665"/>
<dbReference type="KEGG" id="ago:AGOS_ACR131C"/>
<dbReference type="eggNOG" id="KOG2976">
    <property type="taxonomic scope" value="Eukaryota"/>
</dbReference>
<dbReference type="HOGENOM" id="CLU_051894_2_0_1"/>
<dbReference type="InParanoid" id="Q75BY9"/>
<dbReference type="OMA" id="SIQKAVW"/>
<dbReference type="OrthoDB" id="272162at2759"/>
<dbReference type="Proteomes" id="UP000000591">
    <property type="component" value="Chromosome III"/>
</dbReference>
<dbReference type="GO" id="GO:0034274">
    <property type="term" value="C:Atg12-Atg5-Atg16 complex"/>
    <property type="evidence" value="ECO:0000318"/>
    <property type="project" value="GO_Central"/>
</dbReference>
<dbReference type="GO" id="GO:0005776">
    <property type="term" value="C:autophagosome"/>
    <property type="evidence" value="ECO:0000318"/>
    <property type="project" value="GO_Central"/>
</dbReference>
<dbReference type="GO" id="GO:0005829">
    <property type="term" value="C:cytosol"/>
    <property type="evidence" value="ECO:0007669"/>
    <property type="project" value="EnsemblFungi"/>
</dbReference>
<dbReference type="GO" id="GO:0061908">
    <property type="term" value="C:phagophore"/>
    <property type="evidence" value="ECO:0000318"/>
    <property type="project" value="GO_Central"/>
</dbReference>
<dbReference type="GO" id="GO:0034045">
    <property type="term" value="C:phagophore assembly site membrane"/>
    <property type="evidence" value="ECO:0000318"/>
    <property type="project" value="GO_Central"/>
</dbReference>
<dbReference type="GO" id="GO:0120095">
    <property type="term" value="C:vacuole-isolation membrane contact site"/>
    <property type="evidence" value="ECO:0007669"/>
    <property type="project" value="EnsemblFungi"/>
</dbReference>
<dbReference type="GO" id="GO:0019776">
    <property type="term" value="F:Atg8-family ligase activity"/>
    <property type="evidence" value="ECO:0007669"/>
    <property type="project" value="EnsemblFungi"/>
</dbReference>
<dbReference type="GO" id="GO:0140355">
    <property type="term" value="F:cargo receptor ligand activity"/>
    <property type="evidence" value="ECO:0007669"/>
    <property type="project" value="EnsemblFungi"/>
</dbReference>
<dbReference type="GO" id="GO:0008047">
    <property type="term" value="F:enzyme activator activity"/>
    <property type="evidence" value="ECO:0007669"/>
    <property type="project" value="EnsemblFungi"/>
</dbReference>
<dbReference type="GO" id="GO:0035973">
    <property type="term" value="P:aggrephagy"/>
    <property type="evidence" value="ECO:0000318"/>
    <property type="project" value="GO_Central"/>
</dbReference>
<dbReference type="GO" id="GO:0000045">
    <property type="term" value="P:autophagosome assembly"/>
    <property type="evidence" value="ECO:0000318"/>
    <property type="project" value="GO_Central"/>
</dbReference>
<dbReference type="GO" id="GO:0006995">
    <property type="term" value="P:cellular response to nitrogen starvation"/>
    <property type="evidence" value="ECO:0000318"/>
    <property type="project" value="GO_Central"/>
</dbReference>
<dbReference type="GO" id="GO:0051365">
    <property type="term" value="P:cellular response to potassium ion starvation"/>
    <property type="evidence" value="ECO:0007669"/>
    <property type="project" value="EnsemblFungi"/>
</dbReference>
<dbReference type="GO" id="GO:0032258">
    <property type="term" value="P:cytoplasm to vacuole targeting by the Cvt pathway"/>
    <property type="evidence" value="ECO:0007669"/>
    <property type="project" value="EnsemblFungi"/>
</dbReference>
<dbReference type="GO" id="GO:0000423">
    <property type="term" value="P:mitophagy"/>
    <property type="evidence" value="ECO:0000318"/>
    <property type="project" value="GO_Central"/>
</dbReference>
<dbReference type="GO" id="GO:0034727">
    <property type="term" value="P:piecemeal microautophagy of the nucleus"/>
    <property type="evidence" value="ECO:0000318"/>
    <property type="project" value="GO_Central"/>
</dbReference>
<dbReference type="FunFam" id="3.10.20.620:FF:000016">
    <property type="match status" value="1"/>
</dbReference>
<dbReference type="Gene3D" id="3.10.20.620">
    <property type="match status" value="1"/>
</dbReference>
<dbReference type="Gene3D" id="1.10.246.190">
    <property type="entry name" value="Autophagy protein Apg5, helix rich domain"/>
    <property type="match status" value="1"/>
</dbReference>
<dbReference type="Gene3D" id="3.10.20.90">
    <property type="entry name" value="Phosphatidylinositol 3-kinase Catalytic Subunit, Chain A, domain 1"/>
    <property type="match status" value="1"/>
</dbReference>
<dbReference type="InterPro" id="IPR007239">
    <property type="entry name" value="Atg5"/>
</dbReference>
<dbReference type="InterPro" id="IPR048940">
    <property type="entry name" value="ATG5_HBR"/>
</dbReference>
<dbReference type="InterPro" id="IPR042526">
    <property type="entry name" value="Atg5_HR"/>
</dbReference>
<dbReference type="InterPro" id="IPR048939">
    <property type="entry name" value="ATG5_UblA"/>
</dbReference>
<dbReference type="InterPro" id="IPR042527">
    <property type="entry name" value="Atg5_UblA_dom_sf"/>
</dbReference>
<dbReference type="InterPro" id="IPR048318">
    <property type="entry name" value="ATG5_UblB"/>
</dbReference>
<dbReference type="PANTHER" id="PTHR13040">
    <property type="entry name" value="AUTOPHAGY PROTEIN 5"/>
    <property type="match status" value="1"/>
</dbReference>
<dbReference type="PANTHER" id="PTHR13040:SF2">
    <property type="entry name" value="AUTOPHAGY PROTEIN 5"/>
    <property type="match status" value="1"/>
</dbReference>
<dbReference type="Pfam" id="PF20637">
    <property type="entry name" value="ATG5_HBR"/>
    <property type="match status" value="1"/>
</dbReference>
<dbReference type="Pfam" id="PF20638">
    <property type="entry name" value="ATG5_UblA"/>
    <property type="match status" value="1"/>
</dbReference>
<dbReference type="Pfam" id="PF04106">
    <property type="entry name" value="ATG5_UblB"/>
    <property type="match status" value="1"/>
</dbReference>
<reference key="1">
    <citation type="journal article" date="2004" name="Science">
        <title>The Ashbya gossypii genome as a tool for mapping the ancient Saccharomyces cerevisiae genome.</title>
        <authorList>
            <person name="Dietrich F.S."/>
            <person name="Voegeli S."/>
            <person name="Brachat S."/>
            <person name="Lerch A."/>
            <person name="Gates K."/>
            <person name="Steiner S."/>
            <person name="Mohr C."/>
            <person name="Poehlmann R."/>
            <person name="Luedi P."/>
            <person name="Choi S."/>
            <person name="Wing R.A."/>
            <person name="Flavier A."/>
            <person name="Gaffney T.D."/>
            <person name="Philippsen P."/>
        </authorList>
    </citation>
    <scope>NUCLEOTIDE SEQUENCE [LARGE SCALE GENOMIC DNA]</scope>
    <source>
        <strain>ATCC 10895 / CBS 109.51 / FGSC 9923 / NRRL Y-1056</strain>
    </source>
</reference>
<reference key="2">
    <citation type="journal article" date="2013" name="G3 (Bethesda)">
        <title>Genomes of Ashbya fungi isolated from insects reveal four mating-type loci, numerous translocations, lack of transposons, and distinct gene duplications.</title>
        <authorList>
            <person name="Dietrich F.S."/>
            <person name="Voegeli S."/>
            <person name="Kuo S."/>
            <person name="Philippsen P."/>
        </authorList>
    </citation>
    <scope>GENOME REANNOTATION</scope>
    <scope>SEQUENCE REVISION TO 126; 135 AND 141-142</scope>
    <source>
        <strain>ATCC 10895 / CBS 109.51 / FGSC 9923 / NRRL Y-1056</strain>
    </source>
</reference>
<comment type="function">
    <text evidence="1">Involved in cytoplasm to vacuole transport (Cvt) and autophagic vesicle formation. Autophagy is essential for maintenance of amino acid levels and protein synthesis under nitrogen starvation. Required for selective autophagic degradation of the nucleus (nucleophagy). Also required for mitophagy, which eliminates defective or superfluous mitochondria in order to fulfill cellular energy requirements and prevent excess ROS production. Conjugation with ATG12, through a ubiquitin-like conjugating system involving ATG7 as an E1-like activating enzyme and ATG10 as an E2-like conjugating enzyme, is essential for its function. The ATG12-ATG5 conjugate acts as an E3-like enzyme which is required for lipidation of ATG8 and ATG8 association to the vesicle membranes (By similarity).</text>
</comment>
<comment type="subunit">
    <text evidence="1">Conjugated with ATG12.</text>
</comment>
<comment type="subcellular location">
    <subcellularLocation>
        <location evidence="1">Preautophagosomal structure membrane</location>
        <topology evidence="1">Peripheral membrane protein</topology>
    </subcellularLocation>
</comment>
<comment type="PTM">
    <text evidence="1">Conjugated to ATG12; which is essential for autophagy.</text>
</comment>
<comment type="similarity">
    <text evidence="2">Belongs to the ATG5 family.</text>
</comment>
<proteinExistence type="inferred from homology"/>
<feature type="chain" id="PRO_0000218999" description="Autophagy protein 5">
    <location>
        <begin position="1"/>
        <end position="293"/>
    </location>
</feature>
<feature type="cross-link" description="Glycyl lysine isopeptide (Lys-Gly) (interchain with G-Cter in ATG12)" evidence="1">
    <location>
        <position position="149"/>
    </location>
</feature>
<gene>
    <name type="primary">ATG5</name>
    <name type="ordered locus">ACR131C</name>
</gene>
<sequence>MGVVNELRQRTWSGMLNVEVVLNPKLVVQGMPDEQVRCHLRIPRESYLVLHLPFVLNKLRGVLRQEVKDAFHGWWFGMEDVLVHWNHPVGTLYDSLVGLRPQERAAQFQANTLTMWTLTLNYSEDARDGSVPLVGGMQQVEDFWRHQWKQACYIIHGSSKQIMSLSIPDSKTFWDCVLQRDERVFRGIASRITARKGGVKALPVRIHQTTLRELRTLQPTVKPGEWGGGTLGELLRAELPECFKNGSVLRPVVHGIEVSPESQLADLYHLFCSFDGFLHISICSPVALIIPTT</sequence>
<keyword id="KW-0072">Autophagy</keyword>
<keyword id="KW-1017">Isopeptide bond</keyword>
<keyword id="KW-0472">Membrane</keyword>
<keyword id="KW-0653">Protein transport</keyword>
<keyword id="KW-1185">Reference proteome</keyword>
<keyword id="KW-0813">Transport</keyword>
<keyword id="KW-0832">Ubl conjugation</keyword>
<evidence type="ECO:0000250" key="1"/>
<evidence type="ECO:0000305" key="2"/>
<protein>
    <recommendedName>
        <fullName>Autophagy protein 5</fullName>
    </recommendedName>
</protein>
<accession>Q75BY9</accession>